<dbReference type="EMBL" id="BC114679">
    <property type="protein sequence ID" value="AAI14680.1"/>
    <property type="molecule type" value="mRNA"/>
</dbReference>
<dbReference type="RefSeq" id="NP_001019644.2">
    <property type="nucleotide sequence ID" value="NM_001024473.2"/>
</dbReference>
<dbReference type="SMR" id="A4FUB7"/>
<dbReference type="FunCoup" id="A4FUB7">
    <property type="interactions" value="1680"/>
</dbReference>
<dbReference type="STRING" id="9913.ENSBTAP00000050552"/>
<dbReference type="PaxDb" id="9913-ENSBTAP00000050552"/>
<dbReference type="GeneID" id="504972"/>
<dbReference type="KEGG" id="bta:504972"/>
<dbReference type="CTD" id="54826"/>
<dbReference type="VEuPathDB" id="HostDB:ENSBTAG00000021471"/>
<dbReference type="eggNOG" id="KOG0017">
    <property type="taxonomic scope" value="Eukaryota"/>
</dbReference>
<dbReference type="HOGENOM" id="CLU_040181_0_0_1"/>
<dbReference type="InParanoid" id="A4FUB7"/>
<dbReference type="OMA" id="YPNNWDD"/>
<dbReference type="OrthoDB" id="413122at2759"/>
<dbReference type="TreeFam" id="TF352301"/>
<dbReference type="Proteomes" id="UP000009136">
    <property type="component" value="Chromosome 7"/>
</dbReference>
<dbReference type="Bgee" id="ENSBTAG00000021471">
    <property type="expression patterns" value="Expressed in spermatocyte and 108 other cell types or tissues"/>
</dbReference>
<dbReference type="GO" id="GO:0003676">
    <property type="term" value="F:nucleic acid binding"/>
    <property type="evidence" value="ECO:0007669"/>
    <property type="project" value="InterPro"/>
</dbReference>
<dbReference type="GO" id="GO:0015074">
    <property type="term" value="P:DNA integration"/>
    <property type="evidence" value="ECO:0007669"/>
    <property type="project" value="InterPro"/>
</dbReference>
<dbReference type="Gene3D" id="1.10.340.70">
    <property type="match status" value="1"/>
</dbReference>
<dbReference type="Gene3D" id="3.30.420.10">
    <property type="entry name" value="Ribonuclease H-like superfamily/Ribonuclease H"/>
    <property type="match status" value="1"/>
</dbReference>
<dbReference type="InterPro" id="IPR001584">
    <property type="entry name" value="Integrase_cat-core"/>
</dbReference>
<dbReference type="InterPro" id="IPR041588">
    <property type="entry name" value="Integrase_H2C2"/>
</dbReference>
<dbReference type="InterPro" id="IPR050951">
    <property type="entry name" value="Retrovirus_Pol_polyprotein"/>
</dbReference>
<dbReference type="InterPro" id="IPR012337">
    <property type="entry name" value="RNaseH-like_sf"/>
</dbReference>
<dbReference type="InterPro" id="IPR036397">
    <property type="entry name" value="RNaseH_sf"/>
</dbReference>
<dbReference type="PANTHER" id="PTHR37984">
    <property type="entry name" value="PROTEIN CBG26694"/>
    <property type="match status" value="1"/>
</dbReference>
<dbReference type="PANTHER" id="PTHR37984:SF5">
    <property type="entry name" value="PROTEIN NYNRIN-LIKE"/>
    <property type="match status" value="1"/>
</dbReference>
<dbReference type="Pfam" id="PF17921">
    <property type="entry name" value="Integrase_H2C2"/>
    <property type="match status" value="1"/>
</dbReference>
<dbReference type="Pfam" id="PF00665">
    <property type="entry name" value="rve"/>
    <property type="match status" value="1"/>
</dbReference>
<dbReference type="SUPFAM" id="SSF53098">
    <property type="entry name" value="Ribonuclease H-like"/>
    <property type="match status" value="1"/>
</dbReference>
<dbReference type="PROSITE" id="PS50994">
    <property type="entry name" value="INTEGRASE"/>
    <property type="match status" value="1"/>
</dbReference>
<feature type="chain" id="PRO_0000333015" description="Gypsy retrotransposon integrase-like protein 1">
    <location>
        <begin position="1"/>
        <end position="499"/>
    </location>
</feature>
<feature type="domain" description="Integrase catalytic" evidence="1">
    <location>
        <begin position="113"/>
        <end position="270"/>
    </location>
</feature>
<evidence type="ECO:0000255" key="1">
    <source>
        <dbReference type="PROSITE-ProRule" id="PRU00457"/>
    </source>
</evidence>
<reference key="1">
    <citation type="submission" date="2006-04" db="EMBL/GenBank/DDBJ databases">
        <authorList>
            <consortium name="NIH - Mammalian Gene Collection (MGC) project"/>
        </authorList>
    </citation>
    <scope>NUCLEOTIDE SEQUENCE [LARGE SCALE MRNA]</scope>
    <source>
        <strain>Hereford</strain>
        <tissue>Uterus</tissue>
    </source>
</reference>
<proteinExistence type="evidence at transcript level"/>
<accession>A4FUB7</accession>
<organism>
    <name type="scientific">Bos taurus</name>
    <name type="common">Bovine</name>
    <dbReference type="NCBI Taxonomy" id="9913"/>
    <lineage>
        <taxon>Eukaryota</taxon>
        <taxon>Metazoa</taxon>
        <taxon>Chordata</taxon>
        <taxon>Craniata</taxon>
        <taxon>Vertebrata</taxon>
        <taxon>Euteleostomi</taxon>
        <taxon>Mammalia</taxon>
        <taxon>Eutheria</taxon>
        <taxon>Laurasiatheria</taxon>
        <taxon>Artiodactyla</taxon>
        <taxon>Ruminantia</taxon>
        <taxon>Pecora</taxon>
        <taxon>Bovidae</taxon>
        <taxon>Bovinae</taxon>
        <taxon>Bos</taxon>
    </lineage>
</organism>
<sequence length="499" mass="56939">MVRSGKNGDLHLKQIAYYKRTGEYHPTTLPSERSGIRRAAKKFVFKEKKKVLRECHENDTGAHHGISRTLTLVESSYYWTSVTNDVKQWVYACQHCQVAKNTVILAPKQHLLKVENPWSIVTVDLMGPFHTSNRSHVYAIIMTDLFTKWVVILPLCDVSASEISKAIINIFFLYGPPQKIIMDQRDEFIHQINVELCELFGTKQIVISHASQTINPAESTPSTIKTFLSKHCVDYPNDWDDHLPAVSFAFNVTHLEPTKNTPYFQMFNRNPYMPESSDIREVDGDNTSMFAKILDAIKEADKIMENKTTSVGQMENNNCHELNKSKIIVKKKPKQQNPFHLKVGHEVLRQRKNWWKDGRFRSEWVGPCVIDYITENGGAVLRDSSGARLKRPIKMSHLKPYVRESGEQDSLHLLHGSVVADHDYVGMPELPVGAYQASILVEDAAIGVDDSELLTSSKDRELLEYRNAKISPLMEDHNALEKQTFSLLDSSNQVLEYLT</sequence>
<keyword id="KW-1185">Reference proteome</keyword>
<protein>
    <recommendedName>
        <fullName>Gypsy retrotransposon integrase-like protein 1</fullName>
        <shortName>GIN-1</shortName>
    </recommendedName>
</protein>
<gene>
    <name type="primary">GIN1</name>
</gene>
<name>GIN1_BOVIN</name>